<keyword id="KW-0150">Chloroplast</keyword>
<keyword id="KW-0472">Membrane</keyword>
<keyword id="KW-0602">Photosynthesis</keyword>
<keyword id="KW-0604">Photosystem II</keyword>
<keyword id="KW-0934">Plastid</keyword>
<keyword id="KW-0674">Reaction center</keyword>
<keyword id="KW-0793">Thylakoid</keyword>
<keyword id="KW-0812">Transmembrane</keyword>
<keyword id="KW-1133">Transmembrane helix</keyword>
<protein>
    <recommendedName>
        <fullName evidence="1">Photosystem II reaction center protein L</fullName>
        <shortName evidence="1">PSII-L</shortName>
    </recommendedName>
</protein>
<comment type="function">
    <text evidence="1">One of the components of the core complex of photosystem II (PSII). PSII is a light-driven water:plastoquinone oxidoreductase that uses light energy to abstract electrons from H(2)O, generating O(2) and a proton gradient subsequently used for ATP formation. It consists of a core antenna complex that captures photons, and an electron transfer chain that converts photonic excitation into a charge separation. This subunit is found at the monomer-monomer interface and is required for correct PSII assembly and/or dimerization.</text>
</comment>
<comment type="subunit">
    <text evidence="1">PSII is composed of 1 copy each of membrane proteins PsbA, PsbB, PsbC, PsbD, PsbE, PsbF, PsbH, PsbI, PsbJ, PsbK, PsbL, PsbM, PsbT, PsbX, PsbY, PsbZ, Psb30/Ycf12, at least 3 peripheral proteins of the oxygen-evolving complex and a large number of cofactors. It forms dimeric complexes.</text>
</comment>
<comment type="subcellular location">
    <subcellularLocation>
        <location evidence="1">Plastid</location>
        <location evidence="1">Chloroplast thylakoid membrane</location>
        <topology evidence="1">Single-pass membrane protein</topology>
    </subcellularLocation>
</comment>
<comment type="similarity">
    <text evidence="1">Belongs to the PsbL family.</text>
</comment>
<gene>
    <name evidence="1" type="primary">psbL</name>
</gene>
<name>PSBL_OENAR</name>
<reference key="1">
    <citation type="journal article" date="2008" name="Nucleic Acids Res.">
        <title>The complete nucleotide sequences of the five genetically distinct plastid genomes of Oenothera, subsection Oenothera: I. Sequence evaluation and plastome evolution.</title>
        <authorList>
            <person name="Greiner S."/>
            <person name="Wang X."/>
            <person name="Rauwolf U."/>
            <person name="Silber M.V."/>
            <person name="Mayer K."/>
            <person name="Meurer J."/>
            <person name="Haberer G."/>
            <person name="Herrmann R.G."/>
        </authorList>
    </citation>
    <scope>NUCLEOTIDE SEQUENCE [LARGE SCALE GENOMIC DNA]</scope>
    <source>
        <strain>cv. Douthat 1</strain>
    </source>
</reference>
<evidence type="ECO:0000255" key="1">
    <source>
        <dbReference type="HAMAP-Rule" id="MF_01317"/>
    </source>
</evidence>
<feature type="chain" id="PRO_0000353264" description="Photosystem II reaction center protein L">
    <location>
        <begin position="1"/>
        <end position="38"/>
    </location>
</feature>
<feature type="transmembrane region" description="Helical" evidence="1">
    <location>
        <begin position="17"/>
        <end position="37"/>
    </location>
</feature>
<dbReference type="EMBL" id="EU262887">
    <property type="protein sequence ID" value="ABW98719.1"/>
    <property type="molecule type" value="Genomic_DNA"/>
</dbReference>
<dbReference type="RefSeq" id="YP_001687152.1">
    <property type="nucleotide sequence ID" value="NC_010358.2"/>
</dbReference>
<dbReference type="SMR" id="B0Z4P1"/>
<dbReference type="GeneID" id="5951936"/>
<dbReference type="GO" id="GO:0009535">
    <property type="term" value="C:chloroplast thylakoid membrane"/>
    <property type="evidence" value="ECO:0007669"/>
    <property type="project" value="UniProtKB-SubCell"/>
</dbReference>
<dbReference type="GO" id="GO:0009539">
    <property type="term" value="C:photosystem II reaction center"/>
    <property type="evidence" value="ECO:0007669"/>
    <property type="project" value="InterPro"/>
</dbReference>
<dbReference type="GO" id="GO:0015979">
    <property type="term" value="P:photosynthesis"/>
    <property type="evidence" value="ECO:0007669"/>
    <property type="project" value="UniProtKB-UniRule"/>
</dbReference>
<dbReference type="HAMAP" id="MF_01317">
    <property type="entry name" value="PSII_PsbL"/>
    <property type="match status" value="1"/>
</dbReference>
<dbReference type="InterPro" id="IPR003372">
    <property type="entry name" value="PSII_PsbL"/>
</dbReference>
<dbReference type="InterPro" id="IPR037266">
    <property type="entry name" value="PSII_PsbL_sf"/>
</dbReference>
<dbReference type="NCBIfam" id="NF001972">
    <property type="entry name" value="PRK00753.1"/>
    <property type="match status" value="1"/>
</dbReference>
<dbReference type="Pfam" id="PF02419">
    <property type="entry name" value="PsbL"/>
    <property type="match status" value="1"/>
</dbReference>
<dbReference type="SUPFAM" id="SSF161017">
    <property type="entry name" value="Photosystem II reaction center protein L, PsbL"/>
    <property type="match status" value="1"/>
</dbReference>
<proteinExistence type="inferred from homology"/>
<geneLocation type="chloroplast"/>
<sequence length="38" mass="4498">MTQSNPNEQDVELNRTSLYWGLLLIFVLAVLFSNYFFN</sequence>
<accession>B0Z4P1</accession>
<organism>
    <name type="scientific">Oenothera argillicola</name>
    <name type="common">Appalachian evening primrose</name>
    <dbReference type="NCBI Taxonomy" id="3940"/>
    <lineage>
        <taxon>Eukaryota</taxon>
        <taxon>Viridiplantae</taxon>
        <taxon>Streptophyta</taxon>
        <taxon>Embryophyta</taxon>
        <taxon>Tracheophyta</taxon>
        <taxon>Spermatophyta</taxon>
        <taxon>Magnoliopsida</taxon>
        <taxon>eudicotyledons</taxon>
        <taxon>Gunneridae</taxon>
        <taxon>Pentapetalae</taxon>
        <taxon>rosids</taxon>
        <taxon>malvids</taxon>
        <taxon>Myrtales</taxon>
        <taxon>Onagraceae</taxon>
        <taxon>Onagroideae</taxon>
        <taxon>Onagreae</taxon>
        <taxon>Oenothera</taxon>
    </lineage>
</organism>